<protein>
    <recommendedName>
        <fullName>Peptidyl-prolyl cis-trans isomerase-like 1</fullName>
        <shortName>PPIase</shortName>
        <ecNumber evidence="3 7">5.2.1.8</ecNumber>
    </recommendedName>
    <alternativeName>
        <fullName>Rotamase PPIL1</fullName>
    </alternativeName>
</protein>
<sequence length="166" mass="18237">MAAIPPDSWQPPNVYLETSMGIIVLELYWKHAPKTCKNFAELARRGYYNGTKFHRIIKDFMIQGGDPTGTGRGGASIYGKQFEDELHPDLKFTGAGILAMANAGPDTNGSQFFVTLAPTQWLDGKHTIFGRVCQGIGMVNRVGMVETNSQDRPVDDVKIIKAYPSG</sequence>
<reference key="1">
    <citation type="journal article" date="1996" name="Cytogenet. Cell Genet.">
        <title>Cloning, expression and chromosomal mapping of a novel cyclophilin-related gene (PPIL1) from human fetal brain.</title>
        <authorList>
            <person name="Ozaki K."/>
            <person name="Fujiwara T."/>
            <person name="Kawai A."/>
            <person name="Shimizu F."/>
            <person name="Takami S."/>
            <person name="Okuno S."/>
            <person name="Takeda S."/>
            <person name="Shimada Y."/>
            <person name="Nagata M."/>
            <person name="Watanabe T."/>
            <person name="Takaichi A."/>
            <person name="Takahashi E."/>
            <person name="Nakamura Y."/>
            <person name="Shin S."/>
        </authorList>
    </citation>
    <scope>NUCLEOTIDE SEQUENCE [MRNA]</scope>
    <source>
        <tissue>Fetal brain</tissue>
    </source>
</reference>
<reference key="2">
    <citation type="journal article" date="2000" name="Genome Res.">
        <title>Identification of novel human genes evolutionarily conserved in Caenorhabditis elegans by comparative proteomics.</title>
        <authorList>
            <person name="Lai C.-H."/>
            <person name="Chou C.-Y."/>
            <person name="Ch'ang L.-Y."/>
            <person name="Liu C.-S."/>
            <person name="Lin W.-C."/>
        </authorList>
    </citation>
    <scope>NUCLEOTIDE SEQUENCE [LARGE SCALE MRNA]</scope>
</reference>
<reference key="3">
    <citation type="journal article" date="2003" name="Genome Res.">
        <title>The secreted protein discovery initiative (SPDI), a large-scale effort to identify novel human secreted and transmembrane proteins: a bioinformatics assessment.</title>
        <authorList>
            <person name="Clark H.F."/>
            <person name="Gurney A.L."/>
            <person name="Abaya E."/>
            <person name="Baker K."/>
            <person name="Baldwin D.T."/>
            <person name="Brush J."/>
            <person name="Chen J."/>
            <person name="Chow B."/>
            <person name="Chui C."/>
            <person name="Crowley C."/>
            <person name="Currell B."/>
            <person name="Deuel B."/>
            <person name="Dowd P."/>
            <person name="Eaton D."/>
            <person name="Foster J.S."/>
            <person name="Grimaldi C."/>
            <person name="Gu Q."/>
            <person name="Hass P.E."/>
            <person name="Heldens S."/>
            <person name="Huang A."/>
            <person name="Kim H.S."/>
            <person name="Klimowski L."/>
            <person name="Jin Y."/>
            <person name="Johnson S."/>
            <person name="Lee J."/>
            <person name="Lewis L."/>
            <person name="Liao D."/>
            <person name="Mark M.R."/>
            <person name="Robbie E."/>
            <person name="Sanchez C."/>
            <person name="Schoenfeld J."/>
            <person name="Seshagiri S."/>
            <person name="Simmons L."/>
            <person name="Singh J."/>
            <person name="Smith V."/>
            <person name="Stinson J."/>
            <person name="Vagts A."/>
            <person name="Vandlen R.L."/>
            <person name="Watanabe C."/>
            <person name="Wieand D."/>
            <person name="Woods K."/>
            <person name="Xie M.-H."/>
            <person name="Yansura D.G."/>
            <person name="Yi S."/>
            <person name="Yu G."/>
            <person name="Yuan J."/>
            <person name="Zhang M."/>
            <person name="Zhang Z."/>
            <person name="Goddard A.D."/>
            <person name="Wood W.I."/>
            <person name="Godowski P.J."/>
            <person name="Gray A.M."/>
        </authorList>
    </citation>
    <scope>NUCLEOTIDE SEQUENCE [LARGE SCALE MRNA]</scope>
</reference>
<reference key="4">
    <citation type="journal article" date="2003" name="Nature">
        <title>The DNA sequence and analysis of human chromosome 6.</title>
        <authorList>
            <person name="Mungall A.J."/>
            <person name="Palmer S.A."/>
            <person name="Sims S.K."/>
            <person name="Edwards C.A."/>
            <person name="Ashurst J.L."/>
            <person name="Wilming L."/>
            <person name="Jones M.C."/>
            <person name="Horton R."/>
            <person name="Hunt S.E."/>
            <person name="Scott C.E."/>
            <person name="Gilbert J.G.R."/>
            <person name="Clamp M.E."/>
            <person name="Bethel G."/>
            <person name="Milne S."/>
            <person name="Ainscough R."/>
            <person name="Almeida J.P."/>
            <person name="Ambrose K.D."/>
            <person name="Andrews T.D."/>
            <person name="Ashwell R.I.S."/>
            <person name="Babbage A.K."/>
            <person name="Bagguley C.L."/>
            <person name="Bailey J."/>
            <person name="Banerjee R."/>
            <person name="Barker D.J."/>
            <person name="Barlow K.F."/>
            <person name="Bates K."/>
            <person name="Beare D.M."/>
            <person name="Beasley H."/>
            <person name="Beasley O."/>
            <person name="Bird C.P."/>
            <person name="Blakey S.E."/>
            <person name="Bray-Allen S."/>
            <person name="Brook J."/>
            <person name="Brown A.J."/>
            <person name="Brown J.Y."/>
            <person name="Burford D.C."/>
            <person name="Burrill W."/>
            <person name="Burton J."/>
            <person name="Carder C."/>
            <person name="Carter N.P."/>
            <person name="Chapman J.C."/>
            <person name="Clark S.Y."/>
            <person name="Clark G."/>
            <person name="Clee C.M."/>
            <person name="Clegg S."/>
            <person name="Cobley V."/>
            <person name="Collier R.E."/>
            <person name="Collins J.E."/>
            <person name="Colman L.K."/>
            <person name="Corby N.R."/>
            <person name="Coville G.J."/>
            <person name="Culley K.M."/>
            <person name="Dhami P."/>
            <person name="Davies J."/>
            <person name="Dunn M."/>
            <person name="Earthrowl M.E."/>
            <person name="Ellington A.E."/>
            <person name="Evans K.A."/>
            <person name="Faulkner L."/>
            <person name="Francis M.D."/>
            <person name="Frankish A."/>
            <person name="Frankland J."/>
            <person name="French L."/>
            <person name="Garner P."/>
            <person name="Garnett J."/>
            <person name="Ghori M.J."/>
            <person name="Gilby L.M."/>
            <person name="Gillson C.J."/>
            <person name="Glithero R.J."/>
            <person name="Grafham D.V."/>
            <person name="Grant M."/>
            <person name="Gribble S."/>
            <person name="Griffiths C."/>
            <person name="Griffiths M.N.D."/>
            <person name="Hall R."/>
            <person name="Halls K.S."/>
            <person name="Hammond S."/>
            <person name="Harley J.L."/>
            <person name="Hart E.A."/>
            <person name="Heath P.D."/>
            <person name="Heathcott R."/>
            <person name="Holmes S.J."/>
            <person name="Howden P.J."/>
            <person name="Howe K.L."/>
            <person name="Howell G.R."/>
            <person name="Huckle E."/>
            <person name="Humphray S.J."/>
            <person name="Humphries M.D."/>
            <person name="Hunt A.R."/>
            <person name="Johnson C.M."/>
            <person name="Joy A.A."/>
            <person name="Kay M."/>
            <person name="Keenan S.J."/>
            <person name="Kimberley A.M."/>
            <person name="King A."/>
            <person name="Laird G.K."/>
            <person name="Langford C."/>
            <person name="Lawlor S."/>
            <person name="Leongamornlert D.A."/>
            <person name="Leversha M."/>
            <person name="Lloyd C.R."/>
            <person name="Lloyd D.M."/>
            <person name="Loveland J.E."/>
            <person name="Lovell J."/>
            <person name="Martin S."/>
            <person name="Mashreghi-Mohammadi M."/>
            <person name="Maslen G.L."/>
            <person name="Matthews L."/>
            <person name="McCann O.T."/>
            <person name="McLaren S.J."/>
            <person name="McLay K."/>
            <person name="McMurray A."/>
            <person name="Moore M.J.F."/>
            <person name="Mullikin J.C."/>
            <person name="Niblett D."/>
            <person name="Nickerson T."/>
            <person name="Novik K.L."/>
            <person name="Oliver K."/>
            <person name="Overton-Larty E.K."/>
            <person name="Parker A."/>
            <person name="Patel R."/>
            <person name="Pearce A.V."/>
            <person name="Peck A.I."/>
            <person name="Phillimore B.J.C.T."/>
            <person name="Phillips S."/>
            <person name="Plumb R.W."/>
            <person name="Porter K.M."/>
            <person name="Ramsey Y."/>
            <person name="Ranby S.A."/>
            <person name="Rice C.M."/>
            <person name="Ross M.T."/>
            <person name="Searle S.M."/>
            <person name="Sehra H.K."/>
            <person name="Sheridan E."/>
            <person name="Skuce C.D."/>
            <person name="Smith S."/>
            <person name="Smith M."/>
            <person name="Spraggon L."/>
            <person name="Squares S.L."/>
            <person name="Steward C.A."/>
            <person name="Sycamore N."/>
            <person name="Tamlyn-Hall G."/>
            <person name="Tester J."/>
            <person name="Theaker A.J."/>
            <person name="Thomas D.W."/>
            <person name="Thorpe A."/>
            <person name="Tracey A."/>
            <person name="Tromans A."/>
            <person name="Tubby B."/>
            <person name="Wall M."/>
            <person name="Wallis J.M."/>
            <person name="West A.P."/>
            <person name="White S.S."/>
            <person name="Whitehead S.L."/>
            <person name="Whittaker H."/>
            <person name="Wild A."/>
            <person name="Willey D.J."/>
            <person name="Wilmer T.E."/>
            <person name="Wood J.M."/>
            <person name="Wray P.W."/>
            <person name="Wyatt J.C."/>
            <person name="Young L."/>
            <person name="Younger R.M."/>
            <person name="Bentley D.R."/>
            <person name="Coulson A."/>
            <person name="Durbin R.M."/>
            <person name="Hubbard T."/>
            <person name="Sulston J.E."/>
            <person name="Dunham I."/>
            <person name="Rogers J."/>
            <person name="Beck S."/>
        </authorList>
    </citation>
    <scope>NUCLEOTIDE SEQUENCE [LARGE SCALE GENOMIC DNA]</scope>
</reference>
<reference key="5">
    <citation type="submission" date="2005-07" db="EMBL/GenBank/DDBJ databases">
        <authorList>
            <person name="Mural R.J."/>
            <person name="Istrail S."/>
            <person name="Sutton G.G."/>
            <person name="Florea L."/>
            <person name="Halpern A.L."/>
            <person name="Mobarry C.M."/>
            <person name="Lippert R."/>
            <person name="Walenz B."/>
            <person name="Shatkay H."/>
            <person name="Dew I."/>
            <person name="Miller J.R."/>
            <person name="Flanigan M.J."/>
            <person name="Edwards N.J."/>
            <person name="Bolanos R."/>
            <person name="Fasulo D."/>
            <person name="Halldorsson B.V."/>
            <person name="Hannenhalli S."/>
            <person name="Turner R."/>
            <person name="Yooseph S."/>
            <person name="Lu F."/>
            <person name="Nusskern D.R."/>
            <person name="Shue B.C."/>
            <person name="Zheng X.H."/>
            <person name="Zhong F."/>
            <person name="Delcher A.L."/>
            <person name="Huson D.H."/>
            <person name="Kravitz S.A."/>
            <person name="Mouchard L."/>
            <person name="Reinert K."/>
            <person name="Remington K.A."/>
            <person name="Clark A.G."/>
            <person name="Waterman M.S."/>
            <person name="Eichler E.E."/>
            <person name="Adams M.D."/>
            <person name="Hunkapiller M.W."/>
            <person name="Myers E.W."/>
            <person name="Venter J.C."/>
        </authorList>
    </citation>
    <scope>NUCLEOTIDE SEQUENCE [LARGE SCALE GENOMIC DNA]</scope>
</reference>
<reference key="6">
    <citation type="journal article" date="2004" name="Genome Res.">
        <title>The status, quality, and expansion of the NIH full-length cDNA project: the Mammalian Gene Collection (MGC).</title>
        <authorList>
            <consortium name="The MGC Project Team"/>
        </authorList>
    </citation>
    <scope>NUCLEOTIDE SEQUENCE [LARGE SCALE MRNA]</scope>
    <source>
        <tissue>Lymph</tissue>
    </source>
</reference>
<reference key="7">
    <citation type="journal article" date="2006" name="J. Biol. Chem.">
        <title>Solution structure of human peptidyl prolyl isomerase-like protein 1 and insights into its interaction with SKIP.</title>
        <authorList>
            <person name="Xu C."/>
            <person name="Zhang J."/>
            <person name="Huang X."/>
            <person name="Sun J."/>
            <person name="Xu Y."/>
            <person name="Tang Y."/>
            <person name="Wu J."/>
            <person name="Shi Y."/>
            <person name="Huang Q."/>
            <person name="Zhang Q."/>
        </authorList>
    </citation>
    <scope>FUNCTION</scope>
    <scope>CATALYTIC ACTIVITY</scope>
    <scope>KINETIC PARAMETERS</scope>
    <scope>ACTIVITY REGULATION</scope>
    <scope>CYCLOSPORIN A BINDING</scope>
    <scope>INTERACTION WITH SNW1</scope>
    <scope>STRUCTURE BY NMR</scope>
</reference>
<reference key="8">
    <citation type="journal article" date="2002" name="RNA">
        <title>Purification and characterization of native spliceosomes suitable for three-dimensional structural analysis.</title>
        <authorList>
            <person name="Jurica M.S."/>
            <person name="Licklider L.J."/>
            <person name="Gygi S.P."/>
            <person name="Grigorieff N."/>
            <person name="Moore M.J."/>
        </authorList>
    </citation>
    <scope>IDENTIFICATION BY MASS SPECTROMETRY</scope>
    <scope>IDENTIFICATION IN THE SPLICEOSOMAL C COMPLEX</scope>
    <scope>FUNCTION</scope>
    <scope>SUBCELLULAR LOCATION</scope>
    <scope>SUBUNIT</scope>
</reference>
<reference key="9">
    <citation type="journal article" date="2011" name="BMC Syst. Biol.">
        <title>Initial characterization of the human central proteome.</title>
        <authorList>
            <person name="Burkard T.R."/>
            <person name="Planyavsky M."/>
            <person name="Kaupe I."/>
            <person name="Breitwieser F.P."/>
            <person name="Buerckstuemmer T."/>
            <person name="Bennett K.L."/>
            <person name="Superti-Furga G."/>
            <person name="Colinge J."/>
        </authorList>
    </citation>
    <scope>IDENTIFICATION BY MASS SPECTROMETRY [LARGE SCALE ANALYSIS]</scope>
</reference>
<reference key="10">
    <citation type="journal article" date="2013" name="J. Proteome Res.">
        <title>Toward a comprehensive characterization of a human cancer cell phosphoproteome.</title>
        <authorList>
            <person name="Zhou H."/>
            <person name="Di Palma S."/>
            <person name="Preisinger C."/>
            <person name="Peng M."/>
            <person name="Polat A.N."/>
            <person name="Heck A.J."/>
            <person name="Mohammed S."/>
        </authorList>
    </citation>
    <scope>PHOSPHORYLATION [LARGE SCALE ANALYSIS] AT SER-149</scope>
    <scope>IDENTIFICATION BY MASS SPECTROMETRY [LARGE SCALE ANALYSIS]</scope>
    <source>
        <tissue>Cervix carcinoma</tissue>
        <tissue>Erythroleukemia</tissue>
    </source>
</reference>
<reference key="11">
    <citation type="journal article" date="2010" name="PLoS ONE">
        <title>The crystal structure of PPIL1 bound to cyclosporine A suggests a binding mode for a linear epitope of the SKIP protein.</title>
        <authorList>
            <person name="Stegmann C.M."/>
            <person name="Luhrmann R."/>
            <person name="Wahl M.C."/>
        </authorList>
    </citation>
    <scope>X-RAY CRYSTALLOGRAPHY (1.15 ANGSTROMS)</scope>
    <scope>INTERACTION WITH SNW1</scope>
</reference>
<reference evidence="11" key="12">
    <citation type="journal article" date="2017" name="Cell">
        <title>An Atomic Structure of the Human Spliceosome.</title>
        <authorList>
            <person name="Zhang X."/>
            <person name="Yan C."/>
            <person name="Hang J."/>
            <person name="Finci L.I."/>
            <person name="Lei J."/>
            <person name="Shi Y."/>
        </authorList>
    </citation>
    <scope>STRUCTURE BY ELECTRON MICROSCOPY (3.60 ANGSTROMS)</scope>
    <scope>FUNCTION</scope>
    <scope>SUBUNIT</scope>
    <scope>SUBCELLULAR LOCATION</scope>
</reference>
<reference evidence="10" key="13">
    <citation type="journal article" date="2017" name="Nature">
        <title>Cryo-EM structure of a human spliceosome activated for step 2 of splicing.</title>
        <authorList>
            <person name="Bertram K."/>
            <person name="Agafonov D.E."/>
            <person name="Liu W.T."/>
            <person name="Dybkov O."/>
            <person name="Will C.L."/>
            <person name="Hartmuth K."/>
            <person name="Urlaub H."/>
            <person name="Kastner B."/>
            <person name="Stark H."/>
            <person name="Luhrmann R."/>
        </authorList>
    </citation>
    <scope>STRUCTURE BY ELECTRON MICROSCOPY (5.90 ANGSTROMS)</scope>
    <scope>FUNCTION</scope>
    <scope>SUBUNIT</scope>
    <scope>SUBCELLULAR LOCATION</scope>
    <scope>IDENTIFICATION BY MASS SPECTROMETRY</scope>
</reference>
<reference key="14">
    <citation type="journal article" date="2021" name="Neuron">
        <title>Mutations in Spliceosomal Genes PPIL1 and PRP17 Cause Neurodegenerative Pontocerebellar Hypoplasia with Microcephaly.</title>
        <authorList>
            <person name="Chai G."/>
            <person name="Webb A."/>
            <person name="Li C."/>
            <person name="Antaki D."/>
            <person name="Lee S."/>
            <person name="Breuss M.W."/>
            <person name="Lang N."/>
            <person name="Stanley V."/>
            <person name="Anzenberg P."/>
            <person name="Yang X."/>
            <person name="Marshall T."/>
            <person name="Gaffney P."/>
            <person name="Wierenga K.J."/>
            <person name="Chung B.H."/>
            <person name="Tsang M.H."/>
            <person name="Pais L.S."/>
            <person name="Lovgren A.K."/>
            <person name="VanNoy G.E."/>
            <person name="Rehm H.L."/>
            <person name="Mirzaa G."/>
            <person name="Leon E."/>
            <person name="Diaz J."/>
            <person name="Neumann A."/>
            <person name="Kalverda A.P."/>
            <person name="Manfield I.W."/>
            <person name="Parry D.A."/>
            <person name="Logan C.V."/>
            <person name="Johnson C.A."/>
            <person name="Bonthron D.T."/>
            <person name="Valleley E.M.A."/>
            <person name="Issa M.Y."/>
            <person name="Abdel-Ghafar S.F."/>
            <person name="Abdel-Hamid M.S."/>
            <person name="Jennings P."/>
            <person name="Zaki M.S."/>
            <person name="Sheridan E."/>
            <person name="Gleeson J.G."/>
        </authorList>
    </citation>
    <scope>INVOLVEMENT IN PCH14</scope>
    <scope>VARIANTS PCH14 45-ARG--GLY-166 DEL; CYS-78; SER-82; THR-99; ALA-ASN-ALA-GLY-PRO-ASP-106 INS; ALA-107; CYS-109; ALA-127 AND GLN-131</scope>
    <scope>CHARACTERIZATION OF VARIANT PCH14 CYS-78; SER-82; THR-99; ALA-ASN-ALA-GLY-PRO-ASP-106 INS; ALA-107; ALA-127 AND GLN-131</scope>
    <scope>FUNCTION</scope>
    <scope>INTERACTION WITH CDC40; RBM22 AND SNW1</scope>
    <scope>MUTAGENESIS OF ARG-55</scope>
    <scope>CATALYTIC ACTIVITY</scope>
</reference>
<evidence type="ECO:0000255" key="1">
    <source>
        <dbReference type="PROSITE-ProRule" id="PRU00156"/>
    </source>
</evidence>
<evidence type="ECO:0000269" key="2">
    <source>
    </source>
</evidence>
<evidence type="ECO:0000269" key="3">
    <source>
    </source>
</evidence>
<evidence type="ECO:0000269" key="4">
    <source>
    </source>
</evidence>
<evidence type="ECO:0000269" key="5">
    <source>
    </source>
</evidence>
<evidence type="ECO:0000269" key="6">
    <source>
    </source>
</evidence>
<evidence type="ECO:0000269" key="7">
    <source>
    </source>
</evidence>
<evidence type="ECO:0000305" key="8"/>
<evidence type="ECO:0000305" key="9">
    <source>
    </source>
</evidence>
<evidence type="ECO:0007744" key="10">
    <source>
        <dbReference type="PDB" id="5MQF"/>
    </source>
</evidence>
<evidence type="ECO:0007744" key="11">
    <source>
        <dbReference type="PDB" id="5XJC"/>
    </source>
</evidence>
<evidence type="ECO:0007744" key="12">
    <source>
    </source>
</evidence>
<evidence type="ECO:0007829" key="13">
    <source>
        <dbReference type="PDB" id="1XWN"/>
    </source>
</evidence>
<evidence type="ECO:0007829" key="14">
    <source>
        <dbReference type="PDB" id="2X7K"/>
    </source>
</evidence>
<evidence type="ECO:0007829" key="15">
    <source>
        <dbReference type="PDB" id="6ID0"/>
    </source>
</evidence>
<evidence type="ECO:0007829" key="16">
    <source>
        <dbReference type="PDB" id="7QTT"/>
    </source>
</evidence>
<keyword id="KW-0002">3D-structure</keyword>
<keyword id="KW-0225">Disease variant</keyword>
<keyword id="KW-0991">Intellectual disability</keyword>
<keyword id="KW-0413">Isomerase</keyword>
<keyword id="KW-0507">mRNA processing</keyword>
<keyword id="KW-0508">mRNA splicing</keyword>
<keyword id="KW-0539">Nucleus</keyword>
<keyword id="KW-0597">Phosphoprotein</keyword>
<keyword id="KW-1267">Proteomics identification</keyword>
<keyword id="KW-1185">Reference proteome</keyword>
<keyword id="KW-0697">Rotamase</keyword>
<keyword id="KW-0747">Spliceosome</keyword>
<proteinExistence type="evidence at protein level"/>
<dbReference type="EC" id="5.2.1.8" evidence="3 7"/>
<dbReference type="EMBL" id="AF151882">
    <property type="protein sequence ID" value="AAD34119.1"/>
    <property type="molecule type" value="mRNA"/>
</dbReference>
<dbReference type="EMBL" id="AY359032">
    <property type="protein sequence ID" value="AAQ89391.1"/>
    <property type="molecule type" value="mRNA"/>
</dbReference>
<dbReference type="EMBL" id="Z85996">
    <property type="status" value="NOT_ANNOTATED_CDS"/>
    <property type="molecule type" value="Genomic_DNA"/>
</dbReference>
<dbReference type="EMBL" id="AL122034">
    <property type="status" value="NOT_ANNOTATED_CDS"/>
    <property type="molecule type" value="Genomic_DNA"/>
</dbReference>
<dbReference type="EMBL" id="CH471081">
    <property type="protein sequence ID" value="EAX03916.1"/>
    <property type="molecule type" value="Genomic_DNA"/>
</dbReference>
<dbReference type="EMBL" id="BC003048">
    <property type="protein sequence ID" value="AAH03048.1"/>
    <property type="molecule type" value="mRNA"/>
</dbReference>
<dbReference type="CCDS" id="CCDS4826.1"/>
<dbReference type="RefSeq" id="NP_057143.1">
    <property type="nucleotide sequence ID" value="NM_016059.5"/>
</dbReference>
<dbReference type="PDB" id="1XWN">
    <property type="method" value="NMR"/>
    <property type="chains" value="A=1-166"/>
</dbReference>
<dbReference type="PDB" id="2K7N">
    <property type="method" value="NMR"/>
    <property type="chains" value="A=1-166"/>
</dbReference>
<dbReference type="PDB" id="2X7K">
    <property type="method" value="X-ray"/>
    <property type="resolution" value="1.15 A"/>
    <property type="chains" value="A=1-166"/>
</dbReference>
<dbReference type="PDB" id="5MQF">
    <property type="method" value="EM"/>
    <property type="resolution" value="5.90 A"/>
    <property type="chains" value="V=1-166"/>
</dbReference>
<dbReference type="PDB" id="5XJC">
    <property type="method" value="EM"/>
    <property type="resolution" value="3.60 A"/>
    <property type="chains" value="S=1-166"/>
</dbReference>
<dbReference type="PDB" id="5YZG">
    <property type="method" value="EM"/>
    <property type="resolution" value="4.10 A"/>
    <property type="chains" value="S=1-166"/>
</dbReference>
<dbReference type="PDB" id="5Z56">
    <property type="method" value="EM"/>
    <property type="resolution" value="5.10 A"/>
    <property type="chains" value="S=1-166"/>
</dbReference>
<dbReference type="PDB" id="5Z57">
    <property type="method" value="EM"/>
    <property type="resolution" value="6.50 A"/>
    <property type="chains" value="S=1-166"/>
</dbReference>
<dbReference type="PDB" id="6FF4">
    <property type="method" value="EM"/>
    <property type="resolution" value="16.00 A"/>
    <property type="chains" value="V=1-166"/>
</dbReference>
<dbReference type="PDB" id="6FF7">
    <property type="method" value="EM"/>
    <property type="resolution" value="4.50 A"/>
    <property type="chains" value="V=1-166"/>
</dbReference>
<dbReference type="PDB" id="6ICZ">
    <property type="method" value="EM"/>
    <property type="resolution" value="3.00 A"/>
    <property type="chains" value="S=1-166"/>
</dbReference>
<dbReference type="PDB" id="6ID0">
    <property type="method" value="EM"/>
    <property type="resolution" value="2.90 A"/>
    <property type="chains" value="S=1-166"/>
</dbReference>
<dbReference type="PDB" id="6ID1">
    <property type="method" value="EM"/>
    <property type="resolution" value="2.86 A"/>
    <property type="chains" value="S=1-166"/>
</dbReference>
<dbReference type="PDB" id="6QDV">
    <property type="method" value="EM"/>
    <property type="resolution" value="3.30 A"/>
    <property type="chains" value="i=3-164"/>
</dbReference>
<dbReference type="PDB" id="6ZYM">
    <property type="method" value="EM"/>
    <property type="resolution" value="3.40 A"/>
    <property type="chains" value="V=1-166"/>
</dbReference>
<dbReference type="PDB" id="7QTT">
    <property type="method" value="EM"/>
    <property type="resolution" value="3.10 A"/>
    <property type="chains" value="p=1-166"/>
</dbReference>
<dbReference type="PDB" id="7W59">
    <property type="method" value="EM"/>
    <property type="resolution" value="3.60 A"/>
    <property type="chains" value="S=1-166"/>
</dbReference>
<dbReference type="PDB" id="7W5A">
    <property type="method" value="EM"/>
    <property type="resolution" value="3.60 A"/>
    <property type="chains" value="S=1-166"/>
</dbReference>
<dbReference type="PDB" id="7W5B">
    <property type="method" value="EM"/>
    <property type="resolution" value="4.30 A"/>
    <property type="chains" value="S=1-166"/>
</dbReference>
<dbReference type="PDB" id="8C6J">
    <property type="method" value="EM"/>
    <property type="resolution" value="2.80 A"/>
    <property type="chains" value="i=1-166"/>
</dbReference>
<dbReference type="PDB" id="8CH6">
    <property type="method" value="EM"/>
    <property type="resolution" value="5.90 A"/>
    <property type="chains" value="p=1-166"/>
</dbReference>
<dbReference type="PDB" id="8I0S">
    <property type="method" value="EM"/>
    <property type="resolution" value="4.20 A"/>
    <property type="chains" value="S=1-166"/>
</dbReference>
<dbReference type="PDB" id="8I0T">
    <property type="method" value="EM"/>
    <property type="resolution" value="3.00 A"/>
    <property type="chains" value="S=1-166"/>
</dbReference>
<dbReference type="PDB" id="8I0U">
    <property type="method" value="EM"/>
    <property type="resolution" value="3.30 A"/>
    <property type="chains" value="S=1-166"/>
</dbReference>
<dbReference type="PDB" id="8I0V">
    <property type="method" value="EM"/>
    <property type="resolution" value="3.00 A"/>
    <property type="chains" value="S=1-166"/>
</dbReference>
<dbReference type="PDB" id="8I0W">
    <property type="method" value="EM"/>
    <property type="resolution" value="3.40 A"/>
    <property type="chains" value="S=1-166"/>
</dbReference>
<dbReference type="PDB" id="8RO2">
    <property type="method" value="EM"/>
    <property type="resolution" value="3.50 A"/>
    <property type="chains" value="S=1-166"/>
</dbReference>
<dbReference type="PDB" id="9FMD">
    <property type="method" value="EM"/>
    <property type="resolution" value="3.30 A"/>
    <property type="chains" value="S=1-166"/>
</dbReference>
<dbReference type="PDBsum" id="1XWN"/>
<dbReference type="PDBsum" id="2K7N"/>
<dbReference type="PDBsum" id="2X7K"/>
<dbReference type="PDBsum" id="5MQF"/>
<dbReference type="PDBsum" id="5XJC"/>
<dbReference type="PDBsum" id="5YZG"/>
<dbReference type="PDBsum" id="5Z56"/>
<dbReference type="PDBsum" id="5Z57"/>
<dbReference type="PDBsum" id="6FF4"/>
<dbReference type="PDBsum" id="6FF7"/>
<dbReference type="PDBsum" id="6ICZ"/>
<dbReference type="PDBsum" id="6ID0"/>
<dbReference type="PDBsum" id="6ID1"/>
<dbReference type="PDBsum" id="6QDV"/>
<dbReference type="PDBsum" id="6ZYM"/>
<dbReference type="PDBsum" id="7QTT"/>
<dbReference type="PDBsum" id="7W59"/>
<dbReference type="PDBsum" id="7W5A"/>
<dbReference type="PDBsum" id="7W5B"/>
<dbReference type="PDBsum" id="8C6J"/>
<dbReference type="PDBsum" id="8CH6"/>
<dbReference type="PDBsum" id="8I0S"/>
<dbReference type="PDBsum" id="8I0T"/>
<dbReference type="PDBsum" id="8I0U"/>
<dbReference type="PDBsum" id="8I0V"/>
<dbReference type="PDBsum" id="8I0W"/>
<dbReference type="PDBsum" id="8RO2"/>
<dbReference type="PDBsum" id="9FMD"/>
<dbReference type="BMRB" id="Q9Y3C6"/>
<dbReference type="EMDB" id="EMD-11569"/>
<dbReference type="EMDB" id="EMD-14146"/>
<dbReference type="EMDB" id="EMD-16452"/>
<dbReference type="EMDB" id="EMD-16658"/>
<dbReference type="EMDB" id="EMD-19399"/>
<dbReference type="EMDB" id="EMD-32317"/>
<dbReference type="EMDB" id="EMD-32319"/>
<dbReference type="EMDB" id="EMD-32321"/>
<dbReference type="EMDB" id="EMD-35108"/>
<dbReference type="EMDB" id="EMD-35109"/>
<dbReference type="EMDB" id="EMD-35110"/>
<dbReference type="EMDB" id="EMD-35111"/>
<dbReference type="EMDB" id="EMD-35113"/>
<dbReference type="EMDB" id="EMD-3545"/>
<dbReference type="EMDB" id="EMD-4255"/>
<dbReference type="EMDB" id="EMD-4525"/>
<dbReference type="EMDB" id="EMD-6721"/>
<dbReference type="EMDB" id="EMD-6864"/>
<dbReference type="EMDB" id="EMD-6889"/>
<dbReference type="EMDB" id="EMD-6890"/>
<dbReference type="EMDB" id="EMD-9645"/>
<dbReference type="EMDB" id="EMD-9646"/>
<dbReference type="EMDB" id="EMD-9647"/>
<dbReference type="SMR" id="Q9Y3C6"/>
<dbReference type="BioGRID" id="119654">
    <property type="interactions" value="139"/>
</dbReference>
<dbReference type="CORUM" id="Q9Y3C6"/>
<dbReference type="FunCoup" id="Q9Y3C6">
    <property type="interactions" value="2173"/>
</dbReference>
<dbReference type="IntAct" id="Q9Y3C6">
    <property type="interactions" value="72"/>
</dbReference>
<dbReference type="MINT" id="Q9Y3C6"/>
<dbReference type="STRING" id="9606.ENSP00000362803"/>
<dbReference type="BindingDB" id="Q9Y3C6"/>
<dbReference type="ChEMBL" id="CHEMBL5291529"/>
<dbReference type="GlyGen" id="Q9Y3C6">
    <property type="glycosylation" value="1 site, 1 O-linked glycan (1 site)"/>
</dbReference>
<dbReference type="iPTMnet" id="Q9Y3C6"/>
<dbReference type="MetOSite" id="Q9Y3C6"/>
<dbReference type="PhosphoSitePlus" id="Q9Y3C6"/>
<dbReference type="SwissPalm" id="Q9Y3C6"/>
<dbReference type="BioMuta" id="PPIL1"/>
<dbReference type="DMDM" id="20177874"/>
<dbReference type="jPOST" id="Q9Y3C6"/>
<dbReference type="MassIVE" id="Q9Y3C6"/>
<dbReference type="PaxDb" id="9606-ENSP00000362803"/>
<dbReference type="PeptideAtlas" id="Q9Y3C6"/>
<dbReference type="ProteomicsDB" id="86015"/>
<dbReference type="Pumba" id="Q9Y3C6"/>
<dbReference type="Antibodypedia" id="29729">
    <property type="antibodies" value="282 antibodies from 29 providers"/>
</dbReference>
<dbReference type="DNASU" id="51645"/>
<dbReference type="Ensembl" id="ENST00000373699.6">
    <property type="protein sequence ID" value="ENSP00000362803.5"/>
    <property type="gene ID" value="ENSG00000137168.8"/>
</dbReference>
<dbReference type="GeneID" id="51645"/>
<dbReference type="KEGG" id="hsa:51645"/>
<dbReference type="MANE-Select" id="ENST00000373699.6">
    <property type="protein sequence ID" value="ENSP00000362803.5"/>
    <property type="RefSeq nucleotide sequence ID" value="NM_016059.5"/>
    <property type="RefSeq protein sequence ID" value="NP_057143.1"/>
</dbReference>
<dbReference type="UCSC" id="uc003omu.3">
    <property type="organism name" value="human"/>
</dbReference>
<dbReference type="AGR" id="HGNC:9260"/>
<dbReference type="CTD" id="51645"/>
<dbReference type="DisGeNET" id="51645"/>
<dbReference type="GeneCards" id="PPIL1"/>
<dbReference type="HGNC" id="HGNC:9260">
    <property type="gene designation" value="PPIL1"/>
</dbReference>
<dbReference type="HPA" id="ENSG00000137168">
    <property type="expression patterns" value="Low tissue specificity"/>
</dbReference>
<dbReference type="MalaCards" id="PPIL1"/>
<dbReference type="MIM" id="601301">
    <property type="type" value="gene"/>
</dbReference>
<dbReference type="MIM" id="619301">
    <property type="type" value="phenotype"/>
</dbReference>
<dbReference type="neXtProt" id="NX_Q9Y3C6"/>
<dbReference type="OpenTargets" id="ENSG00000137168"/>
<dbReference type="PharmGKB" id="PA33587"/>
<dbReference type="VEuPathDB" id="HostDB:ENSG00000137168"/>
<dbReference type="eggNOG" id="KOG0881">
    <property type="taxonomic scope" value="Eukaryota"/>
</dbReference>
<dbReference type="GeneTree" id="ENSGT00940000153189"/>
<dbReference type="HOGENOM" id="CLU_012062_16_3_1"/>
<dbReference type="InParanoid" id="Q9Y3C6"/>
<dbReference type="OMA" id="ELYNDHA"/>
<dbReference type="OrthoDB" id="5916692at2759"/>
<dbReference type="PAN-GO" id="Q9Y3C6">
    <property type="GO annotations" value="3 GO annotations based on evolutionary models"/>
</dbReference>
<dbReference type="PhylomeDB" id="Q9Y3C6"/>
<dbReference type="TreeFam" id="TF300200"/>
<dbReference type="BRENDA" id="5.2.1.8">
    <property type="organism ID" value="2681"/>
</dbReference>
<dbReference type="PathwayCommons" id="Q9Y3C6"/>
<dbReference type="Reactome" id="R-HSA-72163">
    <property type="pathway name" value="mRNA Splicing - Major Pathway"/>
</dbReference>
<dbReference type="SABIO-RK" id="Q9Y3C6"/>
<dbReference type="SignaLink" id="Q9Y3C6"/>
<dbReference type="BioGRID-ORCS" id="51645">
    <property type="hits" value="534 hits in 1171 CRISPR screens"/>
</dbReference>
<dbReference type="CD-CODE" id="FB4E32DD">
    <property type="entry name" value="Presynaptic clusters and postsynaptic densities"/>
</dbReference>
<dbReference type="ChiTaRS" id="PPIL1">
    <property type="organism name" value="human"/>
</dbReference>
<dbReference type="EvolutionaryTrace" id="Q9Y3C6"/>
<dbReference type="GeneWiki" id="PPIL1"/>
<dbReference type="GenomeRNAi" id="51645"/>
<dbReference type="Pharos" id="Q9Y3C6">
    <property type="development level" value="Tbio"/>
</dbReference>
<dbReference type="PRO" id="PR:Q9Y3C6"/>
<dbReference type="Proteomes" id="UP000005640">
    <property type="component" value="Chromosome 6"/>
</dbReference>
<dbReference type="RNAct" id="Q9Y3C6">
    <property type="molecule type" value="protein"/>
</dbReference>
<dbReference type="Bgee" id="ENSG00000137168">
    <property type="expression patterns" value="Expressed in heart right ventricle and 181 other cell types or tissues"/>
</dbReference>
<dbReference type="ExpressionAtlas" id="Q9Y3C6">
    <property type="expression patterns" value="baseline and differential"/>
</dbReference>
<dbReference type="GO" id="GO:0071013">
    <property type="term" value="C:catalytic step 2 spliceosome"/>
    <property type="evidence" value="ECO:0000314"/>
    <property type="project" value="UniProtKB"/>
</dbReference>
<dbReference type="GO" id="GO:0005654">
    <property type="term" value="C:nucleoplasm"/>
    <property type="evidence" value="ECO:0000304"/>
    <property type="project" value="Reactome"/>
</dbReference>
<dbReference type="GO" id="GO:0005634">
    <property type="term" value="C:nucleus"/>
    <property type="evidence" value="ECO:0000314"/>
    <property type="project" value="UniProtKB"/>
</dbReference>
<dbReference type="GO" id="GO:0071007">
    <property type="term" value="C:U2-type catalytic step 2 spliceosome"/>
    <property type="evidence" value="ECO:0000314"/>
    <property type="project" value="UniProtKB"/>
</dbReference>
<dbReference type="GO" id="GO:0097718">
    <property type="term" value="F:disordered domain specific binding"/>
    <property type="evidence" value="ECO:0000353"/>
    <property type="project" value="CAFA"/>
</dbReference>
<dbReference type="GO" id="GO:0003755">
    <property type="term" value="F:peptidyl-prolyl cis-trans isomerase activity"/>
    <property type="evidence" value="ECO:0000314"/>
    <property type="project" value="UniProtKB"/>
</dbReference>
<dbReference type="GO" id="GO:1990403">
    <property type="term" value="P:embryonic brain development"/>
    <property type="evidence" value="ECO:0000315"/>
    <property type="project" value="UniProtKB"/>
</dbReference>
<dbReference type="GO" id="GO:0000398">
    <property type="term" value="P:mRNA splicing, via spliceosome"/>
    <property type="evidence" value="ECO:0000314"/>
    <property type="project" value="UniProtKB"/>
</dbReference>
<dbReference type="GO" id="GO:0006457">
    <property type="term" value="P:protein folding"/>
    <property type="evidence" value="ECO:0000318"/>
    <property type="project" value="GO_Central"/>
</dbReference>
<dbReference type="GO" id="GO:0000413">
    <property type="term" value="P:protein peptidyl-prolyl isomerization"/>
    <property type="evidence" value="ECO:0000314"/>
    <property type="project" value="UniProtKB"/>
</dbReference>
<dbReference type="CDD" id="cd01922">
    <property type="entry name" value="cyclophilin_SpCYP2_like"/>
    <property type="match status" value="1"/>
</dbReference>
<dbReference type="FunFam" id="2.40.100.10:FF:000008">
    <property type="entry name" value="Peptidyl-prolyl cis-trans isomerase"/>
    <property type="match status" value="1"/>
</dbReference>
<dbReference type="Gene3D" id="2.40.100.10">
    <property type="entry name" value="Cyclophilin-like"/>
    <property type="match status" value="1"/>
</dbReference>
<dbReference type="InterPro" id="IPR029000">
    <property type="entry name" value="Cyclophilin-like_dom_sf"/>
</dbReference>
<dbReference type="InterPro" id="IPR024936">
    <property type="entry name" value="Cyclophilin-type_PPIase"/>
</dbReference>
<dbReference type="InterPro" id="IPR020892">
    <property type="entry name" value="Cyclophilin-type_PPIase_CS"/>
</dbReference>
<dbReference type="InterPro" id="IPR002130">
    <property type="entry name" value="Cyclophilin-type_PPIase_dom"/>
</dbReference>
<dbReference type="InterPro" id="IPR044666">
    <property type="entry name" value="Cyclophilin_A-like"/>
</dbReference>
<dbReference type="PANTHER" id="PTHR45625">
    <property type="entry name" value="PEPTIDYL-PROLYL CIS-TRANS ISOMERASE-RELATED"/>
    <property type="match status" value="1"/>
</dbReference>
<dbReference type="PANTHER" id="PTHR45625:SF4">
    <property type="entry name" value="PEPTIDYLPROLYL ISOMERASE DOMAIN AND WD REPEAT-CONTAINING PROTEIN 1"/>
    <property type="match status" value="1"/>
</dbReference>
<dbReference type="Pfam" id="PF00160">
    <property type="entry name" value="Pro_isomerase"/>
    <property type="match status" value="1"/>
</dbReference>
<dbReference type="PIRSF" id="PIRSF001467">
    <property type="entry name" value="Peptidylpro_ismrse"/>
    <property type="match status" value="1"/>
</dbReference>
<dbReference type="PRINTS" id="PR00153">
    <property type="entry name" value="CSAPPISMRASE"/>
</dbReference>
<dbReference type="SUPFAM" id="SSF50891">
    <property type="entry name" value="Cyclophilin-like"/>
    <property type="match status" value="1"/>
</dbReference>
<dbReference type="PROSITE" id="PS00170">
    <property type="entry name" value="CSA_PPIASE_1"/>
    <property type="match status" value="1"/>
</dbReference>
<dbReference type="PROSITE" id="PS50072">
    <property type="entry name" value="CSA_PPIASE_2"/>
    <property type="match status" value="1"/>
</dbReference>
<name>PPIL1_HUMAN</name>
<organism>
    <name type="scientific">Homo sapiens</name>
    <name type="common">Human</name>
    <dbReference type="NCBI Taxonomy" id="9606"/>
    <lineage>
        <taxon>Eukaryota</taxon>
        <taxon>Metazoa</taxon>
        <taxon>Chordata</taxon>
        <taxon>Craniata</taxon>
        <taxon>Vertebrata</taxon>
        <taxon>Euteleostomi</taxon>
        <taxon>Mammalia</taxon>
        <taxon>Eutheria</taxon>
        <taxon>Euarchontoglires</taxon>
        <taxon>Primates</taxon>
        <taxon>Haplorrhini</taxon>
        <taxon>Catarrhini</taxon>
        <taxon>Hominidae</taxon>
        <taxon>Homo</taxon>
    </lineage>
</organism>
<comment type="function">
    <text evidence="2 3 5 6 7">Involved in pre-mRNA splicing as component of the spliceosome (PubMed:11991638, PubMed:28076346, PubMed:28502770, PubMed:33220177). PPIases accelerate the folding of proteins. Catalyzes the cis-trans isomerization of proline imidic peptide bonds in oligopeptides (PubMed:16595688). Catalyzes prolyl peptide bond isomerization in CDC40/PRP17 (PubMed:33220177). Plays an important role in embryonic brain development; this function is independent of its isomerase activity (PubMed:33220177).</text>
</comment>
<comment type="catalytic activity">
    <reaction evidence="3 7">
        <text>[protein]-peptidylproline (omega=180) = [protein]-peptidylproline (omega=0)</text>
        <dbReference type="Rhea" id="RHEA:16237"/>
        <dbReference type="Rhea" id="RHEA-COMP:10747"/>
        <dbReference type="Rhea" id="RHEA-COMP:10748"/>
        <dbReference type="ChEBI" id="CHEBI:83833"/>
        <dbReference type="ChEBI" id="CHEBI:83834"/>
        <dbReference type="EC" id="5.2.1.8"/>
    </reaction>
</comment>
<comment type="activity regulation">
    <text evidence="3">Inhibited by Cyclosporin A.</text>
</comment>
<comment type="biophysicochemical properties">
    <kinetics>
        <KM evidence="3">230 uM for N-succinyl-Ala-Ala-Pro-Phe-p-nitroanilide</KM>
    </kinetics>
</comment>
<comment type="subunit">
    <text evidence="2 3 4 5 6 7">Identified in the spliceosome C complex (PubMed:11991638, PubMed:28076346, PubMed:28502770). Interacts with SNW1/SKIP (PubMed:16595688, PubMed:20368803, PubMed:33220177). Interacts with CDC40/PRP17; this interaction leads to CDC40 isomerization (PubMed:33220177). Interacts with RBM22 (PubMed:33220177).</text>
</comment>
<comment type="interaction">
    <interactant intactId="EBI-2557649">
        <id>Q9Y3C6</id>
    </interactant>
    <interactant intactId="EBI-2528742">
        <id>Q9UMD9</id>
        <label>COL17A1</label>
    </interactant>
    <organismsDiffer>false</organismsDiffer>
    <experiments>3</experiments>
</comment>
<comment type="interaction">
    <interactant intactId="EBI-2557649">
        <id>Q9Y3C6</id>
    </interactant>
    <interactant intactId="EBI-358410">
        <id>Q16630</id>
        <label>CPSF6</label>
    </interactant>
    <organismsDiffer>false</organismsDiffer>
    <experiments>4</experiments>
</comment>
<comment type="interaction">
    <interactant intactId="EBI-2557649">
        <id>Q9Y3C6</id>
    </interactant>
    <interactant intactId="EBI-742054">
        <id>Q96D03</id>
        <label>DDIT4L</label>
    </interactant>
    <organismsDiffer>false</organismsDiffer>
    <experiments>3</experiments>
</comment>
<comment type="interaction">
    <interactant intactId="EBI-2557649">
        <id>Q9Y3C6</id>
    </interactant>
    <interactant intactId="EBI-10981970">
        <id>Q5T749</id>
        <label>KPRP</label>
    </interactant>
    <organismsDiffer>false</organismsDiffer>
    <experiments>3</experiments>
</comment>
<comment type="interaction">
    <interactant intactId="EBI-2557649">
        <id>Q9Y3C6</id>
    </interactant>
    <interactant intactId="EBI-12179869">
        <id>P50458</id>
        <label>LHX2</label>
    </interactant>
    <organismsDiffer>false</organismsDiffer>
    <experiments>3</experiments>
</comment>
<comment type="interaction">
    <interactant intactId="EBI-2557649">
        <id>Q9Y3C6</id>
    </interactant>
    <interactant intactId="EBI-2514973">
        <id>Q92802</id>
        <label>N4BP2L2</label>
    </interactant>
    <organismsDiffer>false</organismsDiffer>
    <experiments>3</experiments>
</comment>
<comment type="interaction">
    <interactant intactId="EBI-2557649">
        <id>Q9Y3C6</id>
    </interactant>
    <interactant intactId="EBI-12029004">
        <id>P78424</id>
        <label>POU6F2</label>
    </interactant>
    <organismsDiffer>false</organismsDiffer>
    <experiments>3</experiments>
</comment>
<comment type="interaction">
    <interactant intactId="EBI-2557649">
        <id>Q9Y3C6</id>
    </interactant>
    <interactant intactId="EBI-11986293">
        <id>P0CG20</id>
        <label>PRR35</label>
    </interactant>
    <organismsDiffer>false</organismsDiffer>
    <experiments>3</experiments>
</comment>
<comment type="interaction">
    <interactant intactId="EBI-2557649">
        <id>Q9Y3C6</id>
    </interactant>
    <interactant intactId="EBI-10182375">
        <id>Q9UFD9</id>
        <label>RIMBP3</label>
    </interactant>
    <organismsDiffer>false</organismsDiffer>
    <experiments>3</experiments>
</comment>
<comment type="interaction">
    <interactant intactId="EBI-2557649">
        <id>Q9Y3C6</id>
    </interactant>
    <interactant intactId="EBI-632715">
        <id>Q13573</id>
        <label>SNW1</label>
    </interactant>
    <organismsDiffer>false</organismsDiffer>
    <experiments>17</experiments>
</comment>
<comment type="interaction">
    <interactant intactId="EBI-2557649">
        <id>Q9Y3C6</id>
    </interactant>
    <interactant intactId="EBI-12047907">
        <id>A6NLX3</id>
        <label>SPDYE4</label>
    </interactant>
    <organismsDiffer>false</organismsDiffer>
    <experiments>3</experiments>
</comment>
<comment type="interaction">
    <interactant intactId="EBI-2557649">
        <id>Q9Y3C6</id>
    </interactant>
    <interactant intactId="EBI-533224">
        <id>P15884</id>
        <label>TCF4</label>
    </interactant>
    <organismsDiffer>false</organismsDiffer>
    <experiments>3</experiments>
</comment>
<comment type="interaction">
    <interactant intactId="EBI-2557649">
        <id>Q9Y3C6</id>
    </interactant>
    <interactant intactId="EBI-13636688">
        <id>P15884-3</id>
        <label>TCF4</label>
    </interactant>
    <organismsDiffer>false</organismsDiffer>
    <experiments>3</experiments>
</comment>
<comment type="interaction">
    <interactant intactId="EBI-2557649">
        <id>Q9Y3C6</id>
    </interactant>
    <interactant intactId="EBI-7705033">
        <id>Q9BRX9</id>
        <label>WDR83</label>
    </interactant>
    <organismsDiffer>false</organismsDiffer>
    <experiments>3</experiments>
</comment>
<comment type="subcellular location">
    <subcellularLocation>
        <location evidence="2 5 6">Nucleus</location>
    </subcellularLocation>
</comment>
<comment type="tissue specificity">
    <text>Ubiquitous, with the most abundant expression in heart and skeletal muscle.</text>
</comment>
<comment type="disease" evidence="7">
    <disease id="DI-06087">
        <name>Pontocerebellar hypoplasia 14</name>
        <acronym>PCH14</acronym>
        <description>A form of pontocerebellar hypoplasia, a disorder characterized by structural defects of the pons and cerebellum, evident upon brain imaging. PCH14 is a severe autosomal recessive form characterized by progressive microcephaly, and poor or absent psychomotor development with severely impaired intellectual development apparent from birth. Other features may include hypotonia, spastic quadriplegia, and early-onset seizures. Early death may occur in some patients.</description>
        <dbReference type="MIM" id="619301"/>
    </disease>
    <text>The disease is caused by variants affecting the gene represented in this entry.</text>
</comment>
<comment type="similarity">
    <text evidence="8">Belongs to the cyclophilin-type PPIase family. PPIL1 subfamily.</text>
</comment>
<gene>
    <name type="primary">PPIL1</name>
    <name type="synonym">CYPL1</name>
    <name type="ORF">CGI-124</name>
    <name type="ORF">UNQ2425/PRO4984</name>
</gene>
<feature type="chain" id="PRO_0000064164" description="Peptidyl-prolyl cis-trans isomerase-like 1">
    <location>
        <begin position="1"/>
        <end position="166"/>
    </location>
</feature>
<feature type="domain" description="PPIase cyclophilin-type" evidence="1">
    <location>
        <begin position="10"/>
        <end position="164"/>
    </location>
</feature>
<feature type="binding site" evidence="9">
    <location>
        <begin position="54"/>
        <end position="65"/>
    </location>
    <ligand>
        <name>cyclosporin A</name>
        <dbReference type="ChEBI" id="CHEBI:4031"/>
    </ligand>
</feature>
<feature type="binding site" evidence="9">
    <location>
        <begin position="70"/>
        <end position="71"/>
    </location>
    <ligand>
        <name>cyclosporin A</name>
        <dbReference type="ChEBI" id="CHEBI:4031"/>
    </ligand>
</feature>
<feature type="binding site" evidence="9">
    <location>
        <begin position="99"/>
        <end position="104"/>
    </location>
    <ligand>
        <name>cyclosporin A</name>
        <dbReference type="ChEBI" id="CHEBI:4031"/>
    </ligand>
</feature>
<feature type="binding site" evidence="9">
    <location>
        <begin position="109"/>
        <end position="113"/>
    </location>
    <ligand>
        <name>cyclosporin A</name>
        <dbReference type="ChEBI" id="CHEBI:4031"/>
    </ligand>
</feature>
<feature type="binding site" evidence="9">
    <location>
        <position position="119"/>
    </location>
    <ligand>
        <name>cyclosporin A</name>
        <dbReference type="ChEBI" id="CHEBI:4031"/>
    </ligand>
</feature>
<feature type="binding site" evidence="9">
    <location>
        <position position="125"/>
    </location>
    <ligand>
        <name>cyclosporin A</name>
        <dbReference type="ChEBI" id="CHEBI:4031"/>
    </ligand>
</feature>
<feature type="modified residue" description="Phosphoserine" evidence="12">
    <location>
        <position position="149"/>
    </location>
</feature>
<feature type="sequence variant" id="VAR_051772" description="In dbSNP:rs12194408.">
    <original>C</original>
    <variation>S</variation>
    <location>
        <position position="36"/>
    </location>
</feature>
<feature type="sequence variant" id="VAR_085506" description="In PCH14." evidence="7">
    <location>
        <begin position="45"/>
        <end position="166"/>
    </location>
</feature>
<feature type="sequence variant" id="VAR_085507" description="In PCH14; uncertain significance; strongly reduced protein levels compared to wild-type after transfection in HEK293T cell line; dbSNP:rs1774173253." evidence="7">
    <original>Y</original>
    <variation>C</variation>
    <location>
        <position position="78"/>
    </location>
</feature>
<feature type="sequence variant" id="VAR_085508" description="In PCH14; uncertain significance; strongly reduced protein levels compared to wild-type after transfection in HEK293T cell line; dbSNP:rs2150653717." evidence="7">
    <original>F</original>
    <variation>S</variation>
    <location>
        <position position="82"/>
    </location>
</feature>
<feature type="sequence variant" id="VAR_085509" description="In PCH14; strongly reduced interaction with SNW1; strongly reduced protein levels in homozygous patient's fibroblasts compared to heterozygous or wild-type cells; in transgenic knockin mice, produces a pontocerebellar hypoplasia-like phenotype; dbSNP:rs199818754." evidence="7">
    <original>A</original>
    <variation>T</variation>
    <location>
        <position position="99"/>
    </location>
</feature>
<feature type="sequence variant" id="VAR_085510" description="In PCH14; uncertain significance; strongly reduced protein levels compared to wild-type after transfection in HEK293T cell line." evidence="7">
    <original>D</original>
    <variation>DANAGPD</variation>
    <location>
        <position position="106"/>
    </location>
</feature>
<feature type="sequence variant" id="VAR_085511" description="In PCH14; uncertain significance; reduced interaction with SNW1; no effect on protein expression level, but shows reduced thermal stability and increased aggregation propensity in vitro; dbSNP:rs1583103432." evidence="7">
    <original>T</original>
    <variation>A</variation>
    <location>
        <position position="107"/>
    </location>
</feature>
<feature type="sequence variant" id="VAR_085512" description="In PCH14; uncertain significance; dbSNP:rs2150653422." evidence="7">
    <original>G</original>
    <variation>C</variation>
    <location>
        <position position="109"/>
    </location>
</feature>
<feature type="sequence variant" id="VAR_085513" description="In PCH14; reduced protein levels in homozygous patient's fibroblasts compared to heterozygous or wild-type cells; dbSNP:rs553128312." evidence="7">
    <original>T</original>
    <variation>A</variation>
    <location>
        <position position="127"/>
    </location>
</feature>
<feature type="sequence variant" id="VAR_085514" description="In PCH14; strongly reduced interaction with SNW1; slightly reduced protein levels compared to wild-type, after transfection in HEK293T cell line, reduced thermal stability and increased aggregation propensity in vitro; in transgenic knockin mice, produces a pontocerebellar hypoplasia-like phenotype; dbSNP:rs765668519." evidence="7">
    <original>R</original>
    <variation>Q</variation>
    <location>
        <position position="131"/>
    </location>
</feature>
<feature type="mutagenesis site" description="Loss of isomerase activity. Can rescue splicing defects when transfected in knockout cells." evidence="7">
    <original>R</original>
    <variation>A</variation>
    <location>
        <position position="55"/>
    </location>
</feature>
<feature type="strand" evidence="14">
    <location>
        <begin position="12"/>
        <end position="18"/>
    </location>
</feature>
<feature type="strand" evidence="14">
    <location>
        <begin position="21"/>
        <end position="27"/>
    </location>
</feature>
<feature type="turn" evidence="14">
    <location>
        <begin position="29"/>
        <end position="31"/>
    </location>
</feature>
<feature type="helix" evidence="14">
    <location>
        <begin position="33"/>
        <end position="45"/>
    </location>
</feature>
<feature type="turn" evidence="14">
    <location>
        <begin position="46"/>
        <end position="50"/>
    </location>
</feature>
<feature type="strand" evidence="14">
    <location>
        <begin position="55"/>
        <end position="57"/>
    </location>
</feature>
<feature type="turn" evidence="14">
    <location>
        <begin position="58"/>
        <end position="60"/>
    </location>
</feature>
<feature type="strand" evidence="14">
    <location>
        <begin position="61"/>
        <end position="64"/>
    </location>
</feature>
<feature type="strand" evidence="14">
    <location>
        <begin position="69"/>
        <end position="72"/>
    </location>
</feature>
<feature type="strand" evidence="15">
    <location>
        <begin position="77"/>
        <end position="80"/>
    </location>
</feature>
<feature type="strand" evidence="16">
    <location>
        <begin position="88"/>
        <end position="90"/>
    </location>
</feature>
<feature type="strand" evidence="14">
    <location>
        <begin position="97"/>
        <end position="100"/>
    </location>
</feature>
<feature type="strand" evidence="14">
    <location>
        <begin position="102"/>
        <end position="104"/>
    </location>
</feature>
<feature type="strand" evidence="14">
    <location>
        <begin position="112"/>
        <end position="117"/>
    </location>
</feature>
<feature type="helix" evidence="14">
    <location>
        <begin position="120"/>
        <end position="122"/>
    </location>
</feature>
<feature type="turn" evidence="14">
    <location>
        <begin position="123"/>
        <end position="125"/>
    </location>
</feature>
<feature type="strand" evidence="14">
    <location>
        <begin position="128"/>
        <end position="134"/>
    </location>
</feature>
<feature type="helix" evidence="14">
    <location>
        <begin position="136"/>
        <end position="142"/>
    </location>
</feature>
<feature type="strand" evidence="13">
    <location>
        <begin position="149"/>
        <end position="151"/>
    </location>
</feature>
<feature type="strand" evidence="14">
    <location>
        <begin position="153"/>
        <end position="155"/>
    </location>
</feature>
<feature type="strand" evidence="14">
    <location>
        <begin position="158"/>
        <end position="164"/>
    </location>
</feature>
<accession>Q9Y3C6</accession>
<accession>O15001</accession>
<accession>Q5TDC9</accession>